<keyword id="KW-0028">Amino-acid biosynthesis</keyword>
<keyword id="KW-0032">Aminotransferase</keyword>
<keyword id="KW-0368">Histidine biosynthesis</keyword>
<keyword id="KW-0663">Pyridoxal phosphate</keyword>
<keyword id="KW-1185">Reference proteome</keyword>
<keyword id="KW-0808">Transferase</keyword>
<dbReference type="EC" id="2.6.1.9" evidence="1"/>
<dbReference type="EMBL" id="AE017282">
    <property type="protein sequence ID" value="AAU92590.1"/>
    <property type="molecule type" value="Genomic_DNA"/>
</dbReference>
<dbReference type="RefSeq" id="WP_010960407.1">
    <property type="nucleotide sequence ID" value="NC_002977.6"/>
</dbReference>
<dbReference type="SMR" id="Q609W4"/>
<dbReference type="STRING" id="243233.MCA1113"/>
<dbReference type="GeneID" id="88223405"/>
<dbReference type="KEGG" id="mca:MCA1113"/>
<dbReference type="eggNOG" id="COG0079">
    <property type="taxonomic scope" value="Bacteria"/>
</dbReference>
<dbReference type="HOGENOM" id="CLU_017584_3_0_6"/>
<dbReference type="UniPathway" id="UPA00031">
    <property type="reaction ID" value="UER00012"/>
</dbReference>
<dbReference type="Proteomes" id="UP000006821">
    <property type="component" value="Chromosome"/>
</dbReference>
<dbReference type="GO" id="GO:0004400">
    <property type="term" value="F:histidinol-phosphate transaminase activity"/>
    <property type="evidence" value="ECO:0007669"/>
    <property type="project" value="UniProtKB-UniRule"/>
</dbReference>
<dbReference type="GO" id="GO:0030170">
    <property type="term" value="F:pyridoxal phosphate binding"/>
    <property type="evidence" value="ECO:0007669"/>
    <property type="project" value="InterPro"/>
</dbReference>
<dbReference type="GO" id="GO:0000105">
    <property type="term" value="P:L-histidine biosynthetic process"/>
    <property type="evidence" value="ECO:0007669"/>
    <property type="project" value="UniProtKB-UniRule"/>
</dbReference>
<dbReference type="CDD" id="cd00609">
    <property type="entry name" value="AAT_like"/>
    <property type="match status" value="1"/>
</dbReference>
<dbReference type="Gene3D" id="3.90.1150.10">
    <property type="entry name" value="Aspartate Aminotransferase, domain 1"/>
    <property type="match status" value="1"/>
</dbReference>
<dbReference type="Gene3D" id="3.40.640.10">
    <property type="entry name" value="Type I PLP-dependent aspartate aminotransferase-like (Major domain)"/>
    <property type="match status" value="1"/>
</dbReference>
<dbReference type="HAMAP" id="MF_01023">
    <property type="entry name" value="HisC_aminotrans_2"/>
    <property type="match status" value="1"/>
</dbReference>
<dbReference type="InterPro" id="IPR001917">
    <property type="entry name" value="Aminotrans_II_pyridoxalP_BS"/>
</dbReference>
<dbReference type="InterPro" id="IPR004839">
    <property type="entry name" value="Aminotransferase_I/II_large"/>
</dbReference>
<dbReference type="InterPro" id="IPR005861">
    <property type="entry name" value="HisP_aminotrans"/>
</dbReference>
<dbReference type="InterPro" id="IPR050106">
    <property type="entry name" value="HistidinolP_aminotransfase"/>
</dbReference>
<dbReference type="InterPro" id="IPR015424">
    <property type="entry name" value="PyrdxlP-dep_Trfase"/>
</dbReference>
<dbReference type="InterPro" id="IPR015421">
    <property type="entry name" value="PyrdxlP-dep_Trfase_major"/>
</dbReference>
<dbReference type="InterPro" id="IPR015422">
    <property type="entry name" value="PyrdxlP-dep_Trfase_small"/>
</dbReference>
<dbReference type="NCBIfam" id="TIGR01141">
    <property type="entry name" value="hisC"/>
    <property type="match status" value="1"/>
</dbReference>
<dbReference type="PANTHER" id="PTHR43643:SF3">
    <property type="entry name" value="HISTIDINOL-PHOSPHATE AMINOTRANSFERASE"/>
    <property type="match status" value="1"/>
</dbReference>
<dbReference type="PANTHER" id="PTHR43643">
    <property type="entry name" value="HISTIDINOL-PHOSPHATE AMINOTRANSFERASE 2"/>
    <property type="match status" value="1"/>
</dbReference>
<dbReference type="Pfam" id="PF00155">
    <property type="entry name" value="Aminotran_1_2"/>
    <property type="match status" value="1"/>
</dbReference>
<dbReference type="SUPFAM" id="SSF53383">
    <property type="entry name" value="PLP-dependent transferases"/>
    <property type="match status" value="1"/>
</dbReference>
<dbReference type="PROSITE" id="PS00599">
    <property type="entry name" value="AA_TRANSFER_CLASS_2"/>
    <property type="match status" value="1"/>
</dbReference>
<proteinExistence type="inferred from homology"/>
<reference key="1">
    <citation type="journal article" date="2004" name="PLoS Biol.">
        <title>Genomic insights into methanotrophy: the complete genome sequence of Methylococcus capsulatus (Bath).</title>
        <authorList>
            <person name="Ward N.L."/>
            <person name="Larsen O."/>
            <person name="Sakwa J."/>
            <person name="Bruseth L."/>
            <person name="Khouri H.M."/>
            <person name="Durkin A.S."/>
            <person name="Dimitrov G."/>
            <person name="Jiang L."/>
            <person name="Scanlan D."/>
            <person name="Kang K.H."/>
            <person name="Lewis M.R."/>
            <person name="Nelson K.E."/>
            <person name="Methe B.A."/>
            <person name="Wu M."/>
            <person name="Heidelberg J.F."/>
            <person name="Paulsen I.T."/>
            <person name="Fouts D.E."/>
            <person name="Ravel J."/>
            <person name="Tettelin H."/>
            <person name="Ren Q."/>
            <person name="Read T.D."/>
            <person name="DeBoy R.T."/>
            <person name="Seshadri R."/>
            <person name="Salzberg S.L."/>
            <person name="Jensen H.B."/>
            <person name="Birkeland N.K."/>
            <person name="Nelson W.C."/>
            <person name="Dodson R.J."/>
            <person name="Grindhaug S.H."/>
            <person name="Holt I.E."/>
            <person name="Eidhammer I."/>
            <person name="Jonasen I."/>
            <person name="Vanaken S."/>
            <person name="Utterback T.R."/>
            <person name="Feldblyum T.V."/>
            <person name="Fraser C.M."/>
            <person name="Lillehaug J.R."/>
            <person name="Eisen J.A."/>
        </authorList>
    </citation>
    <scope>NUCLEOTIDE SEQUENCE [LARGE SCALE GENOMIC DNA]</scope>
    <source>
        <strain>ATCC 33009 / NCIMB 11132 / Bath</strain>
    </source>
</reference>
<feature type="chain" id="PRO_0000153391" description="Histidinol-phosphate aminotransferase 1">
    <location>
        <begin position="1"/>
        <end position="357"/>
    </location>
</feature>
<feature type="modified residue" description="N6-(pyridoxal phosphate)lysine" evidence="1">
    <location>
        <position position="210"/>
    </location>
</feature>
<comment type="catalytic activity">
    <reaction evidence="1">
        <text>L-histidinol phosphate + 2-oxoglutarate = 3-(imidazol-4-yl)-2-oxopropyl phosphate + L-glutamate</text>
        <dbReference type="Rhea" id="RHEA:23744"/>
        <dbReference type="ChEBI" id="CHEBI:16810"/>
        <dbReference type="ChEBI" id="CHEBI:29985"/>
        <dbReference type="ChEBI" id="CHEBI:57766"/>
        <dbReference type="ChEBI" id="CHEBI:57980"/>
        <dbReference type="EC" id="2.6.1.9"/>
    </reaction>
</comment>
<comment type="cofactor">
    <cofactor evidence="1">
        <name>pyridoxal 5'-phosphate</name>
        <dbReference type="ChEBI" id="CHEBI:597326"/>
    </cofactor>
</comment>
<comment type="pathway">
    <text evidence="1">Amino-acid biosynthesis; L-histidine biosynthesis; L-histidine from 5-phospho-alpha-D-ribose 1-diphosphate: step 7/9.</text>
</comment>
<comment type="subunit">
    <text evidence="1">Homodimer.</text>
</comment>
<comment type="similarity">
    <text evidence="1">Belongs to the class-II pyridoxal-phosphate-dependent aminotransferase family. Histidinol-phosphate aminotransferase subfamily.</text>
</comment>
<accession>Q609W4</accession>
<name>HIS81_METCA</name>
<sequence length="357" mass="39513">MNPYWSALVRDLKPYVPGEQPKLDNLVKLNTNENPYPPSPKVLAAIRGELGASLRLYPDPNAELLKQAIARYHGVGANQVFVGNGSDEVLAHAFQALLKQTRPILFPDITYSFYPVYCGLYDIAHETVPLTESFEIRIEDYLRPNGGVVFPNPNAPTGRLLPLADIETLLSKNRDSVVIVDEAYIDFGGESAAALVNRFPHLLVIQTLSKSRSLAGLRVGFALGEPGLIEALERVKGSFNSYPLDRLAIVGGVAAFDDRDHFEWSRQAIMWTRQWLSRGLAELGFEVLPSAANFVFVRHPRHDGAELAAALRDRHIIVRHFKLPRIDQFLRITVGTEGECQILLDALSELVAGQAAA</sequence>
<gene>
    <name evidence="1" type="primary">hisC1</name>
    <name type="synonym">hisC-1</name>
    <name type="ordered locus">MCA1113</name>
</gene>
<protein>
    <recommendedName>
        <fullName evidence="1">Histidinol-phosphate aminotransferase 1</fullName>
        <ecNumber evidence="1">2.6.1.9</ecNumber>
    </recommendedName>
    <alternativeName>
        <fullName evidence="1">Imidazole acetol-phosphate transaminase 1</fullName>
    </alternativeName>
</protein>
<organism>
    <name type="scientific">Methylococcus capsulatus (strain ATCC 33009 / NCIMB 11132 / Bath)</name>
    <dbReference type="NCBI Taxonomy" id="243233"/>
    <lineage>
        <taxon>Bacteria</taxon>
        <taxon>Pseudomonadati</taxon>
        <taxon>Pseudomonadota</taxon>
        <taxon>Gammaproteobacteria</taxon>
        <taxon>Methylococcales</taxon>
        <taxon>Methylococcaceae</taxon>
        <taxon>Methylococcus</taxon>
    </lineage>
</organism>
<evidence type="ECO:0000255" key="1">
    <source>
        <dbReference type="HAMAP-Rule" id="MF_01023"/>
    </source>
</evidence>